<sequence>MAVVLRLSRAGTHKAPFYHVVATDSRNARDGKYIEDVGIYDPTQQPERIELKAERIEHWLKVGATPSQTVAMILKRAKKTAQPAEKKA</sequence>
<keyword id="KW-1185">Reference proteome</keyword>
<keyword id="KW-0687">Ribonucleoprotein</keyword>
<keyword id="KW-0689">Ribosomal protein</keyword>
<protein>
    <recommendedName>
        <fullName evidence="1">Small ribosomal subunit protein bS16</fullName>
    </recommendedName>
    <alternativeName>
        <fullName evidence="2">30S ribosomal protein S16</fullName>
    </alternativeName>
</protein>
<comment type="similarity">
    <text evidence="1">Belongs to the bacterial ribosomal protein bS16 family.</text>
</comment>
<name>RS16_ANADF</name>
<dbReference type="EMBL" id="CP000769">
    <property type="protein sequence ID" value="ABS26144.1"/>
    <property type="molecule type" value="Genomic_DNA"/>
</dbReference>
<dbReference type="RefSeq" id="WP_012096722.1">
    <property type="nucleotide sequence ID" value="NC_009675.1"/>
</dbReference>
<dbReference type="SMR" id="A7HBP8"/>
<dbReference type="STRING" id="404589.Anae109_1941"/>
<dbReference type="KEGG" id="afw:Anae109_1941"/>
<dbReference type="eggNOG" id="COG0228">
    <property type="taxonomic scope" value="Bacteria"/>
</dbReference>
<dbReference type="HOGENOM" id="CLU_100590_5_1_7"/>
<dbReference type="OrthoDB" id="9807878at2"/>
<dbReference type="Proteomes" id="UP000006382">
    <property type="component" value="Chromosome"/>
</dbReference>
<dbReference type="GO" id="GO:0005737">
    <property type="term" value="C:cytoplasm"/>
    <property type="evidence" value="ECO:0007669"/>
    <property type="project" value="UniProtKB-ARBA"/>
</dbReference>
<dbReference type="GO" id="GO:0015935">
    <property type="term" value="C:small ribosomal subunit"/>
    <property type="evidence" value="ECO:0007669"/>
    <property type="project" value="TreeGrafter"/>
</dbReference>
<dbReference type="GO" id="GO:0003735">
    <property type="term" value="F:structural constituent of ribosome"/>
    <property type="evidence" value="ECO:0007669"/>
    <property type="project" value="InterPro"/>
</dbReference>
<dbReference type="GO" id="GO:0006412">
    <property type="term" value="P:translation"/>
    <property type="evidence" value="ECO:0007669"/>
    <property type="project" value="UniProtKB-UniRule"/>
</dbReference>
<dbReference type="Gene3D" id="3.30.1320.10">
    <property type="match status" value="1"/>
</dbReference>
<dbReference type="HAMAP" id="MF_00385">
    <property type="entry name" value="Ribosomal_bS16"/>
    <property type="match status" value="1"/>
</dbReference>
<dbReference type="InterPro" id="IPR000307">
    <property type="entry name" value="Ribosomal_bS16"/>
</dbReference>
<dbReference type="InterPro" id="IPR023803">
    <property type="entry name" value="Ribosomal_bS16_dom_sf"/>
</dbReference>
<dbReference type="NCBIfam" id="TIGR00002">
    <property type="entry name" value="S16"/>
    <property type="match status" value="1"/>
</dbReference>
<dbReference type="PANTHER" id="PTHR12919">
    <property type="entry name" value="30S RIBOSOMAL PROTEIN S16"/>
    <property type="match status" value="1"/>
</dbReference>
<dbReference type="PANTHER" id="PTHR12919:SF20">
    <property type="entry name" value="SMALL RIBOSOMAL SUBUNIT PROTEIN BS16M"/>
    <property type="match status" value="1"/>
</dbReference>
<dbReference type="Pfam" id="PF00886">
    <property type="entry name" value="Ribosomal_S16"/>
    <property type="match status" value="1"/>
</dbReference>
<dbReference type="SUPFAM" id="SSF54565">
    <property type="entry name" value="Ribosomal protein S16"/>
    <property type="match status" value="1"/>
</dbReference>
<evidence type="ECO:0000255" key="1">
    <source>
        <dbReference type="HAMAP-Rule" id="MF_00385"/>
    </source>
</evidence>
<evidence type="ECO:0000305" key="2"/>
<proteinExistence type="inferred from homology"/>
<gene>
    <name evidence="1" type="primary">rpsP</name>
    <name type="ordered locus">Anae109_1941</name>
</gene>
<accession>A7HBP8</accession>
<reference key="1">
    <citation type="journal article" date="2015" name="Genome Announc.">
        <title>Complete genome sequence of Anaeromyxobacter sp. Fw109-5, an anaerobic, metal-reducing bacterium isolated from a contaminated subsurface environment.</title>
        <authorList>
            <person name="Hwang C."/>
            <person name="Copeland A."/>
            <person name="Lucas S."/>
            <person name="Lapidus A."/>
            <person name="Barry K."/>
            <person name="Glavina Del Rio T."/>
            <person name="Dalin E."/>
            <person name="Tice H."/>
            <person name="Pitluck S."/>
            <person name="Sims D."/>
            <person name="Brettin T."/>
            <person name="Bruce D.C."/>
            <person name="Detter J.C."/>
            <person name="Han C.S."/>
            <person name="Schmutz J."/>
            <person name="Larimer F.W."/>
            <person name="Land M.L."/>
            <person name="Hauser L.J."/>
            <person name="Kyrpides N."/>
            <person name="Lykidis A."/>
            <person name="Richardson P."/>
            <person name="Belieav A."/>
            <person name="Sanford R.A."/>
            <person name="Loeffler F.E."/>
            <person name="Fields M.W."/>
        </authorList>
    </citation>
    <scope>NUCLEOTIDE SEQUENCE [LARGE SCALE GENOMIC DNA]</scope>
    <source>
        <strain>Fw109-5</strain>
    </source>
</reference>
<feature type="chain" id="PRO_1000049210" description="Small ribosomal subunit protein bS16">
    <location>
        <begin position="1"/>
        <end position="88"/>
    </location>
</feature>
<organism>
    <name type="scientific">Anaeromyxobacter sp. (strain Fw109-5)</name>
    <dbReference type="NCBI Taxonomy" id="404589"/>
    <lineage>
        <taxon>Bacteria</taxon>
        <taxon>Pseudomonadati</taxon>
        <taxon>Myxococcota</taxon>
        <taxon>Myxococcia</taxon>
        <taxon>Myxococcales</taxon>
        <taxon>Cystobacterineae</taxon>
        <taxon>Anaeromyxobacteraceae</taxon>
        <taxon>Anaeromyxobacter</taxon>
    </lineage>
</organism>